<feature type="signal peptide" evidence="2">
    <location>
        <begin position="1"/>
        <end position="31"/>
    </location>
</feature>
<feature type="chain" id="PRO_0000365507" description="Germin-like protein 3-6">
    <location>
        <begin position="32"/>
        <end position="229"/>
    </location>
</feature>
<feature type="domain" description="Cupin type-1" evidence="2">
    <location>
        <begin position="67"/>
        <end position="219"/>
    </location>
</feature>
<feature type="binding site" evidence="1">
    <location>
        <position position="116"/>
    </location>
    <ligand>
        <name>Mn(2+)</name>
        <dbReference type="ChEBI" id="CHEBI:29035"/>
    </ligand>
</feature>
<feature type="binding site" evidence="1">
    <location>
        <position position="118"/>
    </location>
    <ligand>
        <name>Mn(2+)</name>
        <dbReference type="ChEBI" id="CHEBI:29035"/>
    </ligand>
</feature>
<feature type="binding site" evidence="1">
    <location>
        <position position="123"/>
    </location>
    <ligand>
        <name>Mn(2+)</name>
        <dbReference type="ChEBI" id="CHEBI:29035"/>
    </ligand>
</feature>
<feature type="binding site" evidence="1">
    <location>
        <position position="165"/>
    </location>
    <ligand>
        <name>Mn(2+)</name>
        <dbReference type="ChEBI" id="CHEBI:29035"/>
    </ligand>
</feature>
<feature type="glycosylation site" description="N-linked (GlcNAc...) asparagine" evidence="2">
    <location>
        <position position="80"/>
    </location>
</feature>
<feature type="glycosylation site" description="N-linked (GlcNAc...) asparagine" evidence="2">
    <location>
        <position position="83"/>
    </location>
</feature>
<feature type="disulfide bond" evidence="1">
    <location>
        <begin position="38"/>
        <end position="53"/>
    </location>
</feature>
<keyword id="KW-0052">Apoplast</keyword>
<keyword id="KW-1015">Disulfide bond</keyword>
<keyword id="KW-0325">Glycoprotein</keyword>
<keyword id="KW-0464">Manganese</keyword>
<keyword id="KW-0479">Metal-binding</keyword>
<keyword id="KW-1185">Reference proteome</keyword>
<keyword id="KW-0964">Secreted</keyword>
<keyword id="KW-0732">Signal</keyword>
<accession>Q851K1</accession>
<accession>A0A0P0W1L5</accession>
<organism>
    <name type="scientific">Oryza sativa subsp. japonica</name>
    <name type="common">Rice</name>
    <dbReference type="NCBI Taxonomy" id="39947"/>
    <lineage>
        <taxon>Eukaryota</taxon>
        <taxon>Viridiplantae</taxon>
        <taxon>Streptophyta</taxon>
        <taxon>Embryophyta</taxon>
        <taxon>Tracheophyta</taxon>
        <taxon>Spermatophyta</taxon>
        <taxon>Magnoliopsida</taxon>
        <taxon>Liliopsida</taxon>
        <taxon>Poales</taxon>
        <taxon>Poaceae</taxon>
        <taxon>BOP clade</taxon>
        <taxon>Oryzoideae</taxon>
        <taxon>Oryzeae</taxon>
        <taxon>Oryzinae</taxon>
        <taxon>Oryza</taxon>
        <taxon>Oryza sativa</taxon>
    </lineage>
</organism>
<sequence>MEHSFKTIAAGVVIVVLLLQQAPVLIRATDADPLQDFCVADLDSKVTVNGHACKPASAAGDEFLFSSKIATGGDVNANPNGSNVTELDVAEWPGVNTLGVSMNRVDFAPGGTNPPHVHPRATEVGIVLRGELLVGIIGTLDTGNRYYSKVVRAGETFVIPRGLMHFQFNVGKTEATMVVSFNSQNPGIVFVPLTLFGSNPPIPTPVLVKALRVDAGVVELLKSKFTGGY</sequence>
<dbReference type="EMBL" id="AC120508">
    <property type="protein sequence ID" value="AAO38502.1"/>
    <property type="molecule type" value="Genomic_DNA"/>
</dbReference>
<dbReference type="EMBL" id="DP000009">
    <property type="protein sequence ID" value="ABF98327.1"/>
    <property type="molecule type" value="Genomic_DNA"/>
</dbReference>
<dbReference type="EMBL" id="AP008209">
    <property type="protein sequence ID" value="BAF12882.1"/>
    <property type="molecule type" value="Genomic_DNA"/>
</dbReference>
<dbReference type="EMBL" id="AP014959">
    <property type="protein sequence ID" value="BAS85866.1"/>
    <property type="molecule type" value="Genomic_DNA"/>
</dbReference>
<dbReference type="EMBL" id="CM000140">
    <property type="protein sequence ID" value="EAZ28224.1"/>
    <property type="molecule type" value="Genomic_DNA"/>
</dbReference>
<dbReference type="EMBL" id="AK059872">
    <property type="protein sequence ID" value="BAG87181.1"/>
    <property type="molecule type" value="mRNA"/>
</dbReference>
<dbReference type="RefSeq" id="XP_015629049.1">
    <property type="nucleotide sequence ID" value="XM_015773563.1"/>
</dbReference>
<dbReference type="SMR" id="Q851K1"/>
<dbReference type="FunCoup" id="Q851K1">
    <property type="interactions" value="44"/>
</dbReference>
<dbReference type="STRING" id="39947.Q851K1"/>
<dbReference type="PaxDb" id="39947-Q851K1"/>
<dbReference type="EnsemblPlants" id="Os03t0694000-01">
    <property type="protein sequence ID" value="Os03t0694000-01"/>
    <property type="gene ID" value="Os03g0694000"/>
</dbReference>
<dbReference type="Gramene" id="Os03t0694000-01">
    <property type="protein sequence ID" value="Os03t0694000-01"/>
    <property type="gene ID" value="Os03g0694000"/>
</dbReference>
<dbReference type="KEGG" id="dosa:Os03g0694000"/>
<dbReference type="eggNOG" id="ENOG502QSRM">
    <property type="taxonomic scope" value="Eukaryota"/>
</dbReference>
<dbReference type="HOGENOM" id="CLU_015790_0_0_1"/>
<dbReference type="InParanoid" id="Q851K1"/>
<dbReference type="OMA" id="ANNFPCK"/>
<dbReference type="OrthoDB" id="635918at2759"/>
<dbReference type="Proteomes" id="UP000000763">
    <property type="component" value="Chromosome 3"/>
</dbReference>
<dbReference type="Proteomes" id="UP000007752">
    <property type="component" value="Chromosome 3"/>
</dbReference>
<dbReference type="Proteomes" id="UP000059680">
    <property type="component" value="Chromosome 3"/>
</dbReference>
<dbReference type="GO" id="GO:0048046">
    <property type="term" value="C:apoplast"/>
    <property type="evidence" value="ECO:0007669"/>
    <property type="project" value="UniProtKB-SubCell"/>
</dbReference>
<dbReference type="GO" id="GO:0030145">
    <property type="term" value="F:manganese ion binding"/>
    <property type="evidence" value="ECO:0007669"/>
    <property type="project" value="InterPro"/>
</dbReference>
<dbReference type="CDD" id="cd02241">
    <property type="entry name" value="cupin_OxOx"/>
    <property type="match status" value="1"/>
</dbReference>
<dbReference type="FunFam" id="2.60.120.10:FF:000005">
    <property type="entry name" value="Germin-like protein subfamily 1 member 8"/>
    <property type="match status" value="1"/>
</dbReference>
<dbReference type="Gene3D" id="2.60.120.10">
    <property type="entry name" value="Jelly Rolls"/>
    <property type="match status" value="1"/>
</dbReference>
<dbReference type="InterPro" id="IPR006045">
    <property type="entry name" value="Cupin_1"/>
</dbReference>
<dbReference type="InterPro" id="IPR001929">
    <property type="entry name" value="Germin"/>
</dbReference>
<dbReference type="InterPro" id="IPR019780">
    <property type="entry name" value="Germin_Mn-BS"/>
</dbReference>
<dbReference type="InterPro" id="IPR014710">
    <property type="entry name" value="RmlC-like_jellyroll"/>
</dbReference>
<dbReference type="InterPro" id="IPR011051">
    <property type="entry name" value="RmlC_Cupin_sf"/>
</dbReference>
<dbReference type="PANTHER" id="PTHR31238">
    <property type="entry name" value="GERMIN-LIKE PROTEIN SUBFAMILY 3 MEMBER 3"/>
    <property type="match status" value="1"/>
</dbReference>
<dbReference type="Pfam" id="PF00190">
    <property type="entry name" value="Cupin_1"/>
    <property type="match status" value="1"/>
</dbReference>
<dbReference type="PRINTS" id="PR00325">
    <property type="entry name" value="GERMIN"/>
</dbReference>
<dbReference type="SMART" id="SM00835">
    <property type="entry name" value="Cupin_1"/>
    <property type="match status" value="1"/>
</dbReference>
<dbReference type="SUPFAM" id="SSF51182">
    <property type="entry name" value="RmlC-like cupins"/>
    <property type="match status" value="1"/>
</dbReference>
<dbReference type="PROSITE" id="PS00725">
    <property type="entry name" value="GERMIN"/>
    <property type="match status" value="1"/>
</dbReference>
<reference key="1">
    <citation type="journal article" date="2005" name="Genome Res.">
        <title>Sequence, annotation, and analysis of synteny between rice chromosome 3 and diverged grass species.</title>
        <authorList>
            <consortium name="The rice chromosome 3 sequencing consortium"/>
            <person name="Buell C.R."/>
            <person name="Yuan Q."/>
            <person name="Ouyang S."/>
            <person name="Liu J."/>
            <person name="Zhu W."/>
            <person name="Wang A."/>
            <person name="Maiti R."/>
            <person name="Haas B."/>
            <person name="Wortman J."/>
            <person name="Pertea M."/>
            <person name="Jones K.M."/>
            <person name="Kim M."/>
            <person name="Overton L."/>
            <person name="Tsitrin T."/>
            <person name="Fadrosh D."/>
            <person name="Bera J."/>
            <person name="Weaver B."/>
            <person name="Jin S."/>
            <person name="Johri S."/>
            <person name="Reardon M."/>
            <person name="Webb K."/>
            <person name="Hill J."/>
            <person name="Moffat K."/>
            <person name="Tallon L."/>
            <person name="Van Aken S."/>
            <person name="Lewis M."/>
            <person name="Utterback T."/>
            <person name="Feldblyum T."/>
            <person name="Zismann V."/>
            <person name="Iobst S."/>
            <person name="Hsiao J."/>
            <person name="de Vazeille A.R."/>
            <person name="Salzberg S.L."/>
            <person name="White O."/>
            <person name="Fraser C.M."/>
            <person name="Yu Y."/>
            <person name="Kim H."/>
            <person name="Rambo T."/>
            <person name="Currie J."/>
            <person name="Collura K."/>
            <person name="Kernodle-Thompson S."/>
            <person name="Wei F."/>
            <person name="Kudrna K."/>
            <person name="Ammiraju J.S.S."/>
            <person name="Luo M."/>
            <person name="Goicoechea J.L."/>
            <person name="Wing R.A."/>
            <person name="Henry D."/>
            <person name="Oates R."/>
            <person name="Palmer M."/>
            <person name="Pries G."/>
            <person name="Saski C."/>
            <person name="Simmons J."/>
            <person name="Soderlund C."/>
            <person name="Nelson W."/>
            <person name="de la Bastide M."/>
            <person name="Spiegel L."/>
            <person name="Nascimento L."/>
            <person name="Huang E."/>
            <person name="Preston R."/>
            <person name="Zutavern T."/>
            <person name="Palmer L."/>
            <person name="O'Shaughnessy A."/>
            <person name="Dike S."/>
            <person name="McCombie W.R."/>
            <person name="Minx P."/>
            <person name="Cordum H."/>
            <person name="Wilson R."/>
            <person name="Jin W."/>
            <person name="Lee H.R."/>
            <person name="Jiang J."/>
            <person name="Jackson S."/>
        </authorList>
    </citation>
    <scope>NUCLEOTIDE SEQUENCE [LARGE SCALE GENOMIC DNA]</scope>
    <source>
        <strain>cv. Nipponbare</strain>
    </source>
</reference>
<reference key="2">
    <citation type="journal article" date="2005" name="Nature">
        <title>The map-based sequence of the rice genome.</title>
        <authorList>
            <consortium name="International rice genome sequencing project (IRGSP)"/>
        </authorList>
    </citation>
    <scope>NUCLEOTIDE SEQUENCE [LARGE SCALE GENOMIC DNA]</scope>
    <source>
        <strain>cv. Nipponbare</strain>
    </source>
</reference>
<reference key="3">
    <citation type="journal article" date="2008" name="Nucleic Acids Res.">
        <title>The rice annotation project database (RAP-DB): 2008 update.</title>
        <authorList>
            <consortium name="The rice annotation project (RAP)"/>
        </authorList>
    </citation>
    <scope>GENOME REANNOTATION</scope>
    <source>
        <strain>cv. Nipponbare</strain>
    </source>
</reference>
<reference key="4">
    <citation type="journal article" date="2013" name="Rice">
        <title>Improvement of the Oryza sativa Nipponbare reference genome using next generation sequence and optical map data.</title>
        <authorList>
            <person name="Kawahara Y."/>
            <person name="de la Bastide M."/>
            <person name="Hamilton J.P."/>
            <person name="Kanamori H."/>
            <person name="McCombie W.R."/>
            <person name="Ouyang S."/>
            <person name="Schwartz D.C."/>
            <person name="Tanaka T."/>
            <person name="Wu J."/>
            <person name="Zhou S."/>
            <person name="Childs K.L."/>
            <person name="Davidson R.M."/>
            <person name="Lin H."/>
            <person name="Quesada-Ocampo L."/>
            <person name="Vaillancourt B."/>
            <person name="Sakai H."/>
            <person name="Lee S.S."/>
            <person name="Kim J."/>
            <person name="Numa H."/>
            <person name="Itoh T."/>
            <person name="Buell C.R."/>
            <person name="Matsumoto T."/>
        </authorList>
    </citation>
    <scope>GENOME REANNOTATION</scope>
    <source>
        <strain>cv. Nipponbare</strain>
    </source>
</reference>
<reference key="5">
    <citation type="journal article" date="2005" name="PLoS Biol.">
        <title>The genomes of Oryza sativa: a history of duplications.</title>
        <authorList>
            <person name="Yu J."/>
            <person name="Wang J."/>
            <person name="Lin W."/>
            <person name="Li S."/>
            <person name="Li H."/>
            <person name="Zhou J."/>
            <person name="Ni P."/>
            <person name="Dong W."/>
            <person name="Hu S."/>
            <person name="Zeng C."/>
            <person name="Zhang J."/>
            <person name="Zhang Y."/>
            <person name="Li R."/>
            <person name="Xu Z."/>
            <person name="Li S."/>
            <person name="Li X."/>
            <person name="Zheng H."/>
            <person name="Cong L."/>
            <person name="Lin L."/>
            <person name="Yin J."/>
            <person name="Geng J."/>
            <person name="Li G."/>
            <person name="Shi J."/>
            <person name="Liu J."/>
            <person name="Lv H."/>
            <person name="Li J."/>
            <person name="Wang J."/>
            <person name="Deng Y."/>
            <person name="Ran L."/>
            <person name="Shi X."/>
            <person name="Wang X."/>
            <person name="Wu Q."/>
            <person name="Li C."/>
            <person name="Ren X."/>
            <person name="Wang J."/>
            <person name="Wang X."/>
            <person name="Li D."/>
            <person name="Liu D."/>
            <person name="Zhang X."/>
            <person name="Ji Z."/>
            <person name="Zhao W."/>
            <person name="Sun Y."/>
            <person name="Zhang Z."/>
            <person name="Bao J."/>
            <person name="Han Y."/>
            <person name="Dong L."/>
            <person name="Ji J."/>
            <person name="Chen P."/>
            <person name="Wu S."/>
            <person name="Liu J."/>
            <person name="Xiao Y."/>
            <person name="Bu D."/>
            <person name="Tan J."/>
            <person name="Yang L."/>
            <person name="Ye C."/>
            <person name="Zhang J."/>
            <person name="Xu J."/>
            <person name="Zhou Y."/>
            <person name="Yu Y."/>
            <person name="Zhang B."/>
            <person name="Zhuang S."/>
            <person name="Wei H."/>
            <person name="Liu B."/>
            <person name="Lei M."/>
            <person name="Yu H."/>
            <person name="Li Y."/>
            <person name="Xu H."/>
            <person name="Wei S."/>
            <person name="He X."/>
            <person name="Fang L."/>
            <person name="Zhang Z."/>
            <person name="Zhang Y."/>
            <person name="Huang X."/>
            <person name="Su Z."/>
            <person name="Tong W."/>
            <person name="Li J."/>
            <person name="Tong Z."/>
            <person name="Li S."/>
            <person name="Ye J."/>
            <person name="Wang L."/>
            <person name="Fang L."/>
            <person name="Lei T."/>
            <person name="Chen C.-S."/>
            <person name="Chen H.-C."/>
            <person name="Xu Z."/>
            <person name="Li H."/>
            <person name="Huang H."/>
            <person name="Zhang F."/>
            <person name="Xu H."/>
            <person name="Li N."/>
            <person name="Zhao C."/>
            <person name="Li S."/>
            <person name="Dong L."/>
            <person name="Huang Y."/>
            <person name="Li L."/>
            <person name="Xi Y."/>
            <person name="Qi Q."/>
            <person name="Li W."/>
            <person name="Zhang B."/>
            <person name="Hu W."/>
            <person name="Zhang Y."/>
            <person name="Tian X."/>
            <person name="Jiao Y."/>
            <person name="Liang X."/>
            <person name="Jin J."/>
            <person name="Gao L."/>
            <person name="Zheng W."/>
            <person name="Hao B."/>
            <person name="Liu S.-M."/>
            <person name="Wang W."/>
            <person name="Yuan L."/>
            <person name="Cao M."/>
            <person name="McDermott J."/>
            <person name="Samudrala R."/>
            <person name="Wang J."/>
            <person name="Wong G.K.-S."/>
            <person name="Yang H."/>
        </authorList>
    </citation>
    <scope>NUCLEOTIDE SEQUENCE [LARGE SCALE GENOMIC DNA]</scope>
    <source>
        <strain>cv. Nipponbare</strain>
    </source>
</reference>
<reference key="6">
    <citation type="journal article" date="2003" name="Science">
        <title>Collection, mapping, and annotation of over 28,000 cDNA clones from japonica rice.</title>
        <authorList>
            <consortium name="The rice full-length cDNA consortium"/>
        </authorList>
    </citation>
    <scope>NUCLEOTIDE SEQUENCE [LARGE SCALE MRNA]</scope>
    <source>
        <strain>cv. Nipponbare</strain>
    </source>
</reference>
<gene>
    <name type="ordered locus">Os03g0694000</name>
    <name type="ordered locus">LOC_Os03g48780</name>
    <name type="ORF">OsJ_011707</name>
    <name type="ORF">OSJNBb0021O11.11</name>
</gene>
<evidence type="ECO:0000250" key="1"/>
<evidence type="ECO:0000255" key="2"/>
<evidence type="ECO:0000305" key="3"/>
<proteinExistence type="evidence at transcript level"/>
<comment type="function">
    <text>May play a role in plant defense. Probably has no oxalate oxidase activity even if the active site is conserved.</text>
</comment>
<comment type="subunit">
    <text evidence="1">Oligomer (believed to be a pentamer but probably hexamer).</text>
</comment>
<comment type="subcellular location">
    <subcellularLocation>
        <location evidence="1">Secreted</location>
        <location evidence="1">Extracellular space</location>
        <location evidence="1">Apoplast</location>
    </subcellularLocation>
</comment>
<comment type="similarity">
    <text evidence="3">Belongs to the germin family.</text>
</comment>
<protein>
    <recommendedName>
        <fullName>Germin-like protein 3-6</fullName>
    </recommendedName>
</protein>
<name>GL36_ORYSJ</name>